<feature type="chain" id="PRO_1000129284" description="Adenosylhomocysteinase">
    <location>
        <begin position="1"/>
        <end position="440"/>
    </location>
</feature>
<feature type="binding site" evidence="1">
    <location>
        <position position="64"/>
    </location>
    <ligand>
        <name>substrate</name>
    </ligand>
</feature>
<feature type="binding site" evidence="1">
    <location>
        <position position="139"/>
    </location>
    <ligand>
        <name>substrate</name>
    </ligand>
</feature>
<feature type="binding site" evidence="1">
    <location>
        <position position="164"/>
    </location>
    <ligand>
        <name>substrate</name>
    </ligand>
</feature>
<feature type="binding site" evidence="1">
    <location>
        <begin position="165"/>
        <end position="167"/>
    </location>
    <ligand>
        <name>NAD(+)</name>
        <dbReference type="ChEBI" id="CHEBI:57540"/>
    </ligand>
</feature>
<feature type="binding site" evidence="1">
    <location>
        <position position="194"/>
    </location>
    <ligand>
        <name>substrate</name>
    </ligand>
</feature>
<feature type="binding site" evidence="1">
    <location>
        <position position="198"/>
    </location>
    <ligand>
        <name>substrate</name>
    </ligand>
</feature>
<feature type="binding site" evidence="1">
    <location>
        <position position="199"/>
    </location>
    <ligand>
        <name>NAD(+)</name>
        <dbReference type="ChEBI" id="CHEBI:57540"/>
    </ligand>
</feature>
<feature type="binding site" evidence="1">
    <location>
        <begin position="228"/>
        <end position="233"/>
    </location>
    <ligand>
        <name>NAD(+)</name>
        <dbReference type="ChEBI" id="CHEBI:57540"/>
    </ligand>
</feature>
<feature type="binding site" evidence="1">
    <location>
        <position position="251"/>
    </location>
    <ligand>
        <name>NAD(+)</name>
        <dbReference type="ChEBI" id="CHEBI:57540"/>
    </ligand>
</feature>
<feature type="binding site" evidence="1">
    <location>
        <position position="286"/>
    </location>
    <ligand>
        <name>NAD(+)</name>
        <dbReference type="ChEBI" id="CHEBI:57540"/>
    </ligand>
</feature>
<feature type="binding site" evidence="1">
    <location>
        <begin position="307"/>
        <end position="309"/>
    </location>
    <ligand>
        <name>NAD(+)</name>
        <dbReference type="ChEBI" id="CHEBI:57540"/>
    </ligand>
</feature>
<feature type="binding site" evidence="1">
    <location>
        <position position="352"/>
    </location>
    <ligand>
        <name>NAD(+)</name>
        <dbReference type="ChEBI" id="CHEBI:57540"/>
    </ligand>
</feature>
<gene>
    <name evidence="1" type="primary">ahcY</name>
    <name type="ordered locus">GbCGDNIH1_0064</name>
</gene>
<protein>
    <recommendedName>
        <fullName evidence="1">Adenosylhomocysteinase</fullName>
        <ecNumber evidence="1">3.13.2.1</ecNumber>
    </recommendedName>
    <alternativeName>
        <fullName evidence="1">S-adenosyl-L-homocysteine hydrolase</fullName>
        <shortName evidence="1">AdoHcyase</shortName>
    </alternativeName>
</protein>
<reference key="1">
    <citation type="journal article" date="2007" name="J. Bacteriol.">
        <title>Genome sequence analysis of the emerging human pathogenic acetic acid bacterium Granulibacter bethesdensis.</title>
        <authorList>
            <person name="Greenberg D.E."/>
            <person name="Porcella S.F."/>
            <person name="Zelazny A.M."/>
            <person name="Virtaneva K."/>
            <person name="Sturdevant D.E."/>
            <person name="Kupko J.J. III"/>
            <person name="Barbian K.D."/>
            <person name="Babar A."/>
            <person name="Dorward D.W."/>
            <person name="Holland S.M."/>
        </authorList>
    </citation>
    <scope>NUCLEOTIDE SEQUENCE [LARGE SCALE GENOMIC DNA]</scope>
    <source>
        <strain>ATCC BAA-1260 / CGDNIH1</strain>
    </source>
</reference>
<keyword id="KW-0963">Cytoplasm</keyword>
<keyword id="KW-0378">Hydrolase</keyword>
<keyword id="KW-0520">NAD</keyword>
<keyword id="KW-0554">One-carbon metabolism</keyword>
<keyword id="KW-1185">Reference proteome</keyword>
<organism>
    <name type="scientific">Granulibacter bethesdensis (strain ATCC BAA-1260 / CGDNIH1)</name>
    <dbReference type="NCBI Taxonomy" id="391165"/>
    <lineage>
        <taxon>Bacteria</taxon>
        <taxon>Pseudomonadati</taxon>
        <taxon>Pseudomonadota</taxon>
        <taxon>Alphaproteobacteria</taxon>
        <taxon>Acetobacterales</taxon>
        <taxon>Acetobacteraceae</taxon>
        <taxon>Granulibacter</taxon>
    </lineage>
</organism>
<evidence type="ECO:0000255" key="1">
    <source>
        <dbReference type="HAMAP-Rule" id="MF_00563"/>
    </source>
</evidence>
<name>SAHH_GRABC</name>
<sequence>MESSMPDTAVAEDYKVRDIGLADWGRKEIRMAEDEMPGLMALREEYGNSKPLAGARIAGCLHMTIQTAVLIETLTALGATVRWSSCNIFSTQDHAAAGIAAAGIPVFAWKGLSEEEFWWCIEQTVRGPDGWTPNMILDDGGDLTVLMHDKYPEMLKDVRGLSEETTTGVHRLWEMAKAGKLLTPAINVNDSVTKSKFDNLYGCRESLVDGIRRGTDVMMAGKIAVVAGFGDVGKGSAASLRNAGCRVLVTEIDPICALQAAMEGYEVVTMDEAASRGDLFVTATGNVDVITIDHMRAMKNRAIVCNIGHFDSEIQIESLRNYRWENVKPQVDEVVFPDGKRLIILSEGRLVNLGNATGHPSFVMSASFTNQVLAQIELWQAKPGQYLPNHVYTLPKHLDEKVAALHLAKVGAKLTKLSDKQAEYIGVSQAGPFKHDLYRY</sequence>
<comment type="function">
    <text evidence="1">May play a key role in the regulation of the intracellular concentration of adenosylhomocysteine.</text>
</comment>
<comment type="catalytic activity">
    <reaction evidence="1">
        <text>S-adenosyl-L-homocysteine + H2O = L-homocysteine + adenosine</text>
        <dbReference type="Rhea" id="RHEA:21708"/>
        <dbReference type="ChEBI" id="CHEBI:15377"/>
        <dbReference type="ChEBI" id="CHEBI:16335"/>
        <dbReference type="ChEBI" id="CHEBI:57856"/>
        <dbReference type="ChEBI" id="CHEBI:58199"/>
        <dbReference type="EC" id="3.13.2.1"/>
    </reaction>
</comment>
<comment type="cofactor">
    <cofactor evidence="1">
        <name>NAD(+)</name>
        <dbReference type="ChEBI" id="CHEBI:57540"/>
    </cofactor>
    <text evidence="1">Binds 1 NAD(+) per subunit.</text>
</comment>
<comment type="pathway">
    <text evidence="1">Amino-acid biosynthesis; L-homocysteine biosynthesis; L-homocysteine from S-adenosyl-L-homocysteine: step 1/1.</text>
</comment>
<comment type="subcellular location">
    <subcellularLocation>
        <location evidence="1">Cytoplasm</location>
    </subcellularLocation>
</comment>
<comment type="similarity">
    <text evidence="1">Belongs to the adenosylhomocysteinase family.</text>
</comment>
<dbReference type="EC" id="3.13.2.1" evidence="1"/>
<dbReference type="EMBL" id="CP000394">
    <property type="protein sequence ID" value="ABI60962.1"/>
    <property type="molecule type" value="Genomic_DNA"/>
</dbReference>
<dbReference type="SMR" id="Q0BW40"/>
<dbReference type="STRING" id="391165.GbCGDNIH1_0064"/>
<dbReference type="KEGG" id="gbe:GbCGDNIH1_0064"/>
<dbReference type="eggNOG" id="COG0499">
    <property type="taxonomic scope" value="Bacteria"/>
</dbReference>
<dbReference type="HOGENOM" id="CLU_025194_2_1_5"/>
<dbReference type="UniPathway" id="UPA00314">
    <property type="reaction ID" value="UER00076"/>
</dbReference>
<dbReference type="Proteomes" id="UP000001963">
    <property type="component" value="Chromosome"/>
</dbReference>
<dbReference type="GO" id="GO:0005829">
    <property type="term" value="C:cytosol"/>
    <property type="evidence" value="ECO:0007669"/>
    <property type="project" value="TreeGrafter"/>
</dbReference>
<dbReference type="GO" id="GO:0004013">
    <property type="term" value="F:adenosylhomocysteinase activity"/>
    <property type="evidence" value="ECO:0007669"/>
    <property type="project" value="UniProtKB-UniRule"/>
</dbReference>
<dbReference type="GO" id="GO:0071269">
    <property type="term" value="P:L-homocysteine biosynthetic process"/>
    <property type="evidence" value="ECO:0007669"/>
    <property type="project" value="UniProtKB-UniRule"/>
</dbReference>
<dbReference type="GO" id="GO:0006730">
    <property type="term" value="P:one-carbon metabolic process"/>
    <property type="evidence" value="ECO:0007669"/>
    <property type="project" value="UniProtKB-KW"/>
</dbReference>
<dbReference type="GO" id="GO:0033353">
    <property type="term" value="P:S-adenosylmethionine cycle"/>
    <property type="evidence" value="ECO:0007669"/>
    <property type="project" value="TreeGrafter"/>
</dbReference>
<dbReference type="CDD" id="cd00401">
    <property type="entry name" value="SAHH"/>
    <property type="match status" value="1"/>
</dbReference>
<dbReference type="FunFam" id="3.40.50.1480:FF:000006">
    <property type="entry name" value="Adenosylhomocysteinase"/>
    <property type="match status" value="1"/>
</dbReference>
<dbReference type="FunFam" id="3.40.50.720:FF:000004">
    <property type="entry name" value="Adenosylhomocysteinase"/>
    <property type="match status" value="1"/>
</dbReference>
<dbReference type="Gene3D" id="3.40.50.1480">
    <property type="entry name" value="Adenosylhomocysteinase-like"/>
    <property type="match status" value="3"/>
</dbReference>
<dbReference type="Gene3D" id="3.40.50.720">
    <property type="entry name" value="NAD(P)-binding Rossmann-like Domain"/>
    <property type="match status" value="1"/>
</dbReference>
<dbReference type="HAMAP" id="MF_00563">
    <property type="entry name" value="AdoHcyase"/>
    <property type="match status" value="1"/>
</dbReference>
<dbReference type="InterPro" id="IPR042172">
    <property type="entry name" value="Adenosylhomocyst_ase-like_sf"/>
</dbReference>
<dbReference type="InterPro" id="IPR000043">
    <property type="entry name" value="Adenosylhomocysteinase-like"/>
</dbReference>
<dbReference type="InterPro" id="IPR015878">
    <property type="entry name" value="Ado_hCys_hydrolase_NAD-bd"/>
</dbReference>
<dbReference type="InterPro" id="IPR036291">
    <property type="entry name" value="NAD(P)-bd_dom_sf"/>
</dbReference>
<dbReference type="InterPro" id="IPR020082">
    <property type="entry name" value="S-Ado-L-homoCys_hydrolase_CS"/>
</dbReference>
<dbReference type="NCBIfam" id="TIGR00936">
    <property type="entry name" value="ahcY"/>
    <property type="match status" value="1"/>
</dbReference>
<dbReference type="NCBIfam" id="NF004005">
    <property type="entry name" value="PRK05476.2-3"/>
    <property type="match status" value="1"/>
</dbReference>
<dbReference type="PANTHER" id="PTHR23420">
    <property type="entry name" value="ADENOSYLHOMOCYSTEINASE"/>
    <property type="match status" value="1"/>
</dbReference>
<dbReference type="PANTHER" id="PTHR23420:SF0">
    <property type="entry name" value="ADENOSYLHOMOCYSTEINASE"/>
    <property type="match status" value="1"/>
</dbReference>
<dbReference type="Pfam" id="PF05221">
    <property type="entry name" value="AdoHcyase"/>
    <property type="match status" value="1"/>
</dbReference>
<dbReference type="Pfam" id="PF00670">
    <property type="entry name" value="AdoHcyase_NAD"/>
    <property type="match status" value="1"/>
</dbReference>
<dbReference type="PIRSF" id="PIRSF001109">
    <property type="entry name" value="Ad_hcy_hydrolase"/>
    <property type="match status" value="1"/>
</dbReference>
<dbReference type="SMART" id="SM00996">
    <property type="entry name" value="AdoHcyase"/>
    <property type="match status" value="1"/>
</dbReference>
<dbReference type="SMART" id="SM00997">
    <property type="entry name" value="AdoHcyase_NAD"/>
    <property type="match status" value="1"/>
</dbReference>
<dbReference type="SUPFAM" id="SSF52283">
    <property type="entry name" value="Formate/glycerate dehydrogenase catalytic domain-like"/>
    <property type="match status" value="1"/>
</dbReference>
<dbReference type="SUPFAM" id="SSF51735">
    <property type="entry name" value="NAD(P)-binding Rossmann-fold domains"/>
    <property type="match status" value="1"/>
</dbReference>
<dbReference type="PROSITE" id="PS00738">
    <property type="entry name" value="ADOHCYASE_1"/>
    <property type="match status" value="1"/>
</dbReference>
<dbReference type="PROSITE" id="PS00739">
    <property type="entry name" value="ADOHCYASE_2"/>
    <property type="match status" value="1"/>
</dbReference>
<accession>Q0BW40</accession>
<proteinExistence type="inferred from homology"/>